<dbReference type="EMBL" id="X74401">
    <property type="protein sequence ID" value="CAA52412.1"/>
    <property type="molecule type" value="mRNA"/>
</dbReference>
<dbReference type="EMBL" id="BC061767">
    <property type="protein sequence ID" value="AAH61767.1"/>
    <property type="molecule type" value="mRNA"/>
</dbReference>
<dbReference type="PIR" id="B54091">
    <property type="entry name" value="B54091"/>
</dbReference>
<dbReference type="RefSeq" id="NP_058972.2">
    <property type="nucleotide sequence ID" value="NM_017276.2"/>
</dbReference>
<dbReference type="SMR" id="P50399"/>
<dbReference type="BioGRID" id="248284">
    <property type="interactions" value="3"/>
</dbReference>
<dbReference type="FunCoup" id="P50399">
    <property type="interactions" value="2913"/>
</dbReference>
<dbReference type="IntAct" id="P50399">
    <property type="interactions" value="2"/>
</dbReference>
<dbReference type="MINT" id="P50399"/>
<dbReference type="STRING" id="10116.ENSRNOP00000024952"/>
<dbReference type="iPTMnet" id="P50399"/>
<dbReference type="PhosphoSitePlus" id="P50399"/>
<dbReference type="SwissPalm" id="P50399"/>
<dbReference type="jPOST" id="P50399"/>
<dbReference type="PaxDb" id="10116-ENSRNOP00000024952"/>
<dbReference type="Ensembl" id="ENSRNOT00000109674.1">
    <property type="protein sequence ID" value="ENSRNOP00000082980.1"/>
    <property type="gene ID" value="ENSRNOG00000018091.7"/>
</dbReference>
<dbReference type="GeneID" id="29662"/>
<dbReference type="KEGG" id="rno:29662"/>
<dbReference type="UCSC" id="RGD:61802">
    <property type="organism name" value="rat"/>
</dbReference>
<dbReference type="AGR" id="RGD:61802"/>
<dbReference type="CTD" id="2665"/>
<dbReference type="RGD" id="61802">
    <property type="gene designation" value="Gdi2"/>
</dbReference>
<dbReference type="eggNOG" id="KOG1439">
    <property type="taxonomic scope" value="Eukaryota"/>
</dbReference>
<dbReference type="GeneTree" id="ENSGT00950000182994"/>
<dbReference type="HOGENOM" id="CLU_021695_0_0_1"/>
<dbReference type="InParanoid" id="P50399"/>
<dbReference type="OMA" id="FETKAKM"/>
<dbReference type="OrthoDB" id="9446342at2759"/>
<dbReference type="PhylomeDB" id="P50399"/>
<dbReference type="TreeFam" id="TF300449"/>
<dbReference type="Reactome" id="R-RNO-6798695">
    <property type="pathway name" value="Neutrophil degranulation"/>
</dbReference>
<dbReference type="Reactome" id="R-RNO-8876198">
    <property type="pathway name" value="RAB GEFs exchange GTP for GDP on RABs"/>
</dbReference>
<dbReference type="PRO" id="PR:P50399"/>
<dbReference type="Proteomes" id="UP000002494">
    <property type="component" value="Chromosome 17"/>
</dbReference>
<dbReference type="Bgee" id="ENSRNOG00000018091">
    <property type="expression patterns" value="Expressed in spleen and 19 other cell types or tissues"/>
</dbReference>
<dbReference type="GO" id="GO:0005829">
    <property type="term" value="C:cytosol"/>
    <property type="evidence" value="ECO:0000318"/>
    <property type="project" value="GO_Central"/>
</dbReference>
<dbReference type="GO" id="GO:0005794">
    <property type="term" value="C:Golgi apparatus"/>
    <property type="evidence" value="ECO:0000266"/>
    <property type="project" value="RGD"/>
</dbReference>
<dbReference type="GO" id="GO:0016020">
    <property type="term" value="C:membrane"/>
    <property type="evidence" value="ECO:0007669"/>
    <property type="project" value="UniProtKB-SubCell"/>
</dbReference>
<dbReference type="GO" id="GO:0045202">
    <property type="term" value="C:synapse"/>
    <property type="evidence" value="ECO:0000314"/>
    <property type="project" value="SynGO"/>
</dbReference>
<dbReference type="GO" id="GO:0005096">
    <property type="term" value="F:GTPase activator activity"/>
    <property type="evidence" value="ECO:0007669"/>
    <property type="project" value="UniProtKB-KW"/>
</dbReference>
<dbReference type="GO" id="GO:0005093">
    <property type="term" value="F:Rab GDP-dissociation inhibitor activity"/>
    <property type="evidence" value="ECO:0000314"/>
    <property type="project" value="RGD"/>
</dbReference>
<dbReference type="GO" id="GO:0031267">
    <property type="term" value="F:small GTPase binding"/>
    <property type="evidence" value="ECO:0000314"/>
    <property type="project" value="RGD"/>
</dbReference>
<dbReference type="GO" id="GO:1902018">
    <property type="term" value="P:negative regulation of cilium assembly"/>
    <property type="evidence" value="ECO:0000250"/>
    <property type="project" value="UniProtKB"/>
</dbReference>
<dbReference type="GO" id="GO:1903565">
    <property type="term" value="P:negative regulation of protein localization to cilium"/>
    <property type="evidence" value="ECO:0000250"/>
    <property type="project" value="UniProtKB"/>
</dbReference>
<dbReference type="GO" id="GO:0015031">
    <property type="term" value="P:protein transport"/>
    <property type="evidence" value="ECO:0007669"/>
    <property type="project" value="InterPro"/>
</dbReference>
<dbReference type="GO" id="GO:0007264">
    <property type="term" value="P:small GTPase-mediated signal transduction"/>
    <property type="evidence" value="ECO:0000266"/>
    <property type="project" value="RGD"/>
</dbReference>
<dbReference type="GO" id="GO:0016192">
    <property type="term" value="P:vesicle-mediated transport"/>
    <property type="evidence" value="ECO:0000270"/>
    <property type="project" value="RGD"/>
</dbReference>
<dbReference type="FunFam" id="1.10.405.10:FF:000001">
    <property type="entry name" value="Rab GDP dissociation inhibitor"/>
    <property type="match status" value="1"/>
</dbReference>
<dbReference type="FunFam" id="3.30.519.10:FF:000005">
    <property type="entry name" value="Rab GDP dissociation inhibitor"/>
    <property type="match status" value="1"/>
</dbReference>
<dbReference type="FunFam" id="3.30.519.10:FF:000014">
    <property type="entry name" value="Rab GDP dissociation inhibitor"/>
    <property type="match status" value="1"/>
</dbReference>
<dbReference type="FunFam" id="3.50.50.60:FF:000158">
    <property type="entry name" value="Rab GDP dissociation inhibitor"/>
    <property type="match status" value="1"/>
</dbReference>
<dbReference type="FunFam" id="3.50.50.60:FF:000232">
    <property type="entry name" value="Rab GDP dissociation inhibitor"/>
    <property type="match status" value="1"/>
</dbReference>
<dbReference type="Gene3D" id="3.50.50.60">
    <property type="entry name" value="FAD/NAD(P)-binding domain"/>
    <property type="match status" value="1"/>
</dbReference>
<dbReference type="Gene3D" id="1.10.405.10">
    <property type="entry name" value="Guanine Nucleotide Dissociation Inhibitor, domain 1"/>
    <property type="match status" value="1"/>
</dbReference>
<dbReference type="Gene3D" id="3.30.519.10">
    <property type="entry name" value="Guanine Nucleotide Dissociation Inhibitor, domain 2"/>
    <property type="match status" value="1"/>
</dbReference>
<dbReference type="InterPro" id="IPR036188">
    <property type="entry name" value="FAD/NAD-bd_sf"/>
</dbReference>
<dbReference type="InterPro" id="IPR018203">
    <property type="entry name" value="GDP_dissociation_inhibitor"/>
</dbReference>
<dbReference type="InterPro" id="IPR000806">
    <property type="entry name" value="RabGDI"/>
</dbReference>
<dbReference type="PANTHER" id="PTHR11787:SF1">
    <property type="entry name" value="RAB GDP DISSOCIATION INHIBITOR BETA"/>
    <property type="match status" value="1"/>
</dbReference>
<dbReference type="PANTHER" id="PTHR11787">
    <property type="entry name" value="RAB GDP-DISSOCIATION INHIBITOR"/>
    <property type="match status" value="1"/>
</dbReference>
<dbReference type="Pfam" id="PF00996">
    <property type="entry name" value="GDI"/>
    <property type="match status" value="1"/>
</dbReference>
<dbReference type="PRINTS" id="PR00892">
    <property type="entry name" value="RABGDI"/>
</dbReference>
<dbReference type="PRINTS" id="PR00891">
    <property type="entry name" value="RABGDIREP"/>
</dbReference>
<dbReference type="SUPFAM" id="SSF51905">
    <property type="entry name" value="FAD/NAD(P)-binding domain"/>
    <property type="match status" value="2"/>
</dbReference>
<comment type="function">
    <text evidence="1">GDP-dissociation inhibitor preventing the GDP to GTP exchange of most Rab proteins. By keeping these small GTPases in their inactive GDP-bound form regulates intracellular membrane trafficking. Negatively regulates protein transport to the cilium and ciliogenesis through the inhibition of RAB8A.</text>
</comment>
<comment type="subunit">
    <text evidence="1">Interacts with RHOH. Interacts with the GDP-bound inactive forms of RAB3A, RAB3B, RAB3C, RAB5A, RAB5B, RAB5C, RAB8A, RAB8B, RAB10, RAB12, RAB35, and RAB43; binds RAB3D to a lesser extent. Interacts with DZIP1; this interaction negatively regulates the interaction of GDI2 with GDP-bound RAB8A.</text>
</comment>
<comment type="subcellular location">
    <subcellularLocation>
        <location>Cytoplasm</location>
    </subcellularLocation>
    <subcellularLocation>
        <location>Membrane</location>
        <topology>Peripheral membrane protein</topology>
    </subcellularLocation>
    <subcellularLocation>
        <location evidence="1">Golgi apparatus</location>
        <location evidence="1">trans-Golgi network</location>
    </subcellularLocation>
</comment>
<comment type="tissue specificity">
    <text>Ubiquitously expressed.</text>
</comment>
<comment type="similarity">
    <text evidence="3">Belongs to the Rab GDI family.</text>
</comment>
<feature type="chain" id="PRO_0000056683" description="Rab GDP dissociation inhibitor beta">
    <location>
        <begin position="1"/>
        <end position="445"/>
    </location>
</feature>
<feature type="modified residue" description="N-acetylmethionine" evidence="1">
    <location>
        <position position="1"/>
    </location>
</feature>
<feature type="modified residue" description="N6-succinyllysine" evidence="2">
    <location>
        <position position="57"/>
    </location>
</feature>
<feature type="modified residue" description="N6-acetyllysine" evidence="1">
    <location>
        <position position="112"/>
    </location>
</feature>
<feature type="modified residue" description="Phosphoserine" evidence="4">
    <location>
        <position position="130"/>
    </location>
</feature>
<feature type="modified residue" description="N6-acetyllysine" evidence="1">
    <location>
        <position position="269"/>
    </location>
</feature>
<feature type="modified residue" description="Phosphoserine" evidence="1">
    <location>
        <position position="382"/>
    </location>
</feature>
<feature type="sequence conflict" description="In Ref. 1; CAA52412." evidence="3" ref="1">
    <original>TINRIKL</original>
    <variation>RLTELNF</variation>
    <location>
        <begin position="205"/>
        <end position="211"/>
    </location>
</feature>
<feature type="sequence conflict" description="In Ref. 1; CAA52412." evidence="3" ref="1">
    <original>LG</original>
    <variation>PW</variation>
    <location>
        <begin position="231"/>
        <end position="232"/>
    </location>
</feature>
<gene>
    <name type="primary">Gdi2</name>
    <name type="synonym">Gdi3</name>
</gene>
<proteinExistence type="evidence at protein level"/>
<evidence type="ECO:0000250" key="1">
    <source>
        <dbReference type="UniProtKB" id="P50395"/>
    </source>
</evidence>
<evidence type="ECO:0000250" key="2">
    <source>
        <dbReference type="UniProtKB" id="Q61598"/>
    </source>
</evidence>
<evidence type="ECO:0000305" key="3"/>
<evidence type="ECO:0007744" key="4">
    <source>
    </source>
</evidence>
<keyword id="KW-0007">Acetylation</keyword>
<keyword id="KW-0963">Cytoplasm</keyword>
<keyword id="KW-0903">Direct protein sequencing</keyword>
<keyword id="KW-0333">Golgi apparatus</keyword>
<keyword id="KW-0343">GTPase activation</keyword>
<keyword id="KW-0472">Membrane</keyword>
<keyword id="KW-0597">Phosphoprotein</keyword>
<keyword id="KW-1185">Reference proteome</keyword>
<organism>
    <name type="scientific">Rattus norvegicus</name>
    <name type="common">Rat</name>
    <dbReference type="NCBI Taxonomy" id="10116"/>
    <lineage>
        <taxon>Eukaryota</taxon>
        <taxon>Metazoa</taxon>
        <taxon>Chordata</taxon>
        <taxon>Craniata</taxon>
        <taxon>Vertebrata</taxon>
        <taxon>Euteleostomi</taxon>
        <taxon>Mammalia</taxon>
        <taxon>Eutheria</taxon>
        <taxon>Euarchontoglires</taxon>
        <taxon>Glires</taxon>
        <taxon>Rodentia</taxon>
        <taxon>Myomorpha</taxon>
        <taxon>Muroidea</taxon>
        <taxon>Muridae</taxon>
        <taxon>Murinae</taxon>
        <taxon>Rattus</taxon>
    </lineage>
</organism>
<sequence>MNEEYDVIVLGTGLTECILSGIMSVNGKKVLHMDQNPYYGGESASITPLEDLYKRFKLPGQPPASMGRGRDWNVDLIPKFLMANGQLVKMLLFTEVTRYMDFKVIEGSFVYKGGKIYKVPSTEAEALASSLMGLFEKRRFRKFLVYVANFDEKDPRTFEGVDPKKTSMRDVYKKFDLGQDVIDFTGHSLALYRTDDYLDQPCCETINRIKLYSESLARYGKSPYLYPLYGLGELPQGFARLSAIYGGTYMLNKPIEEIIVQNGKVVGVKSEGEIARCKQLICDPSYVKDRVEKVGQVIRVICILSHPIKNTNDANSCQIIIPQNQVNRKSDIYVCMISFAHNVAAQGKYIAIVSTTVETKEPEKEIRPALELLEPIEQKFVSISDLFVPKDLGTDSQIFISRAYDATTHFETTCDDIKDIYKRMTGSEFDFEEMKRKKNDIYGED</sequence>
<name>GDIB_RAT</name>
<protein>
    <recommendedName>
        <fullName>Rab GDP dissociation inhibitor beta</fullName>
        <shortName>Rab GDI beta</shortName>
    </recommendedName>
    <alternativeName>
        <fullName>GDI-3</fullName>
    </alternativeName>
    <alternativeName>
        <fullName>Guanosine diphosphate dissociation inhibitor 2</fullName>
        <shortName>GDI-2</shortName>
    </alternativeName>
</protein>
<reference key="1">
    <citation type="journal article" date="1994" name="J. Biol. Chem.">
        <title>Molecular cloning and characterization of two rab GDI species from rat brain: brain-specific and ubiquitous types.</title>
        <authorList>
            <person name="Nishimura N."/>
            <person name="Nakamura H."/>
            <person name="Takai Y."/>
            <person name="Sano K."/>
        </authorList>
    </citation>
    <scope>NUCLEOTIDE SEQUENCE [MRNA]</scope>
    <source>
        <strain>Sprague-Dawley</strain>
        <tissue>Brain</tissue>
    </source>
</reference>
<reference key="2">
    <citation type="journal article" date="2004" name="Genome Res.">
        <title>The status, quality, and expansion of the NIH full-length cDNA project: the Mammalian Gene Collection (MGC).</title>
        <authorList>
            <consortium name="The MGC Project Team"/>
        </authorList>
    </citation>
    <scope>NUCLEOTIDE SEQUENCE [LARGE SCALE MRNA]</scope>
    <source>
        <tissue>Prostate</tissue>
    </source>
</reference>
<reference key="3">
    <citation type="journal article" date="1995" name="Biochem. Biophys. Res. Commun.">
        <title>Purification and characterization of Rab GDI beta from rat brain.</title>
        <authorList>
            <person name="Araki K."/>
            <person name="Nakanishi H."/>
            <person name="Hirano H."/>
            <person name="Kato M."/>
            <person name="Sasaki T."/>
            <person name="Takai Y."/>
        </authorList>
    </citation>
    <scope>PROTEIN SEQUENCE OF 30-54 AND 58-74</scope>
    <scope>CHARACTERIZATION</scope>
</reference>
<reference key="4">
    <citation type="submission" date="2007-07" db="UniProtKB">
        <authorList>
            <person name="Lubec G."/>
            <person name="Afjehi-Sadat L."/>
            <person name="Kang S.U."/>
        </authorList>
    </citation>
    <scope>PROTEIN SEQUENCE OF 80-98; 104-112; 119-137; 143-156; 175-193; 211-218; 349-360 AND 365-402</scope>
    <scope>IDENTIFICATION BY MASS SPECTROMETRY</scope>
    <source>
        <strain>Sprague-Dawley</strain>
        <tissue>Brain</tissue>
        <tissue>Spinal cord</tissue>
    </source>
</reference>
<reference key="5">
    <citation type="journal article" date="2012" name="Nat. Commun.">
        <title>Quantitative maps of protein phosphorylation sites across 14 different rat organs and tissues.</title>
        <authorList>
            <person name="Lundby A."/>
            <person name="Secher A."/>
            <person name="Lage K."/>
            <person name="Nordsborg N.B."/>
            <person name="Dmytriyev A."/>
            <person name="Lundby C."/>
            <person name="Olsen J.V."/>
        </authorList>
    </citation>
    <scope>PHOSPHORYLATION [LARGE SCALE ANALYSIS] AT SER-130</scope>
    <scope>IDENTIFICATION BY MASS SPECTROMETRY [LARGE SCALE ANALYSIS]</scope>
</reference>
<accession>P50399</accession>
<accession>Q6P797</accession>